<accession>B3EUL3</accession>
<name>RL14_AMOA5</name>
<feature type="chain" id="PRO_1000144216" description="Large ribosomal subunit protein uL14">
    <location>
        <begin position="1"/>
        <end position="122"/>
    </location>
</feature>
<organism>
    <name type="scientific">Amoebophilus asiaticus (strain 5a2)</name>
    <dbReference type="NCBI Taxonomy" id="452471"/>
    <lineage>
        <taxon>Bacteria</taxon>
        <taxon>Pseudomonadati</taxon>
        <taxon>Bacteroidota</taxon>
        <taxon>Cytophagia</taxon>
        <taxon>Cytophagales</taxon>
        <taxon>Amoebophilaceae</taxon>
        <taxon>Candidatus Amoebophilus</taxon>
    </lineage>
</organism>
<gene>
    <name evidence="1" type="primary">rplN</name>
    <name type="ordered locus">Aasi_0187</name>
</gene>
<dbReference type="EMBL" id="CP001102">
    <property type="protein sequence ID" value="ACE05632.1"/>
    <property type="molecule type" value="Genomic_DNA"/>
</dbReference>
<dbReference type="RefSeq" id="WP_012472397.1">
    <property type="nucleotide sequence ID" value="NC_010830.1"/>
</dbReference>
<dbReference type="SMR" id="B3EUL3"/>
<dbReference type="STRING" id="452471.Aasi_0187"/>
<dbReference type="KEGG" id="aas:Aasi_0187"/>
<dbReference type="eggNOG" id="COG0093">
    <property type="taxonomic scope" value="Bacteria"/>
</dbReference>
<dbReference type="HOGENOM" id="CLU_095071_2_1_10"/>
<dbReference type="OrthoDB" id="9806379at2"/>
<dbReference type="Proteomes" id="UP000001227">
    <property type="component" value="Chromosome"/>
</dbReference>
<dbReference type="GO" id="GO:0022625">
    <property type="term" value="C:cytosolic large ribosomal subunit"/>
    <property type="evidence" value="ECO:0007669"/>
    <property type="project" value="TreeGrafter"/>
</dbReference>
<dbReference type="GO" id="GO:0070180">
    <property type="term" value="F:large ribosomal subunit rRNA binding"/>
    <property type="evidence" value="ECO:0007669"/>
    <property type="project" value="TreeGrafter"/>
</dbReference>
<dbReference type="GO" id="GO:0003735">
    <property type="term" value="F:structural constituent of ribosome"/>
    <property type="evidence" value="ECO:0007669"/>
    <property type="project" value="InterPro"/>
</dbReference>
<dbReference type="GO" id="GO:0006412">
    <property type="term" value="P:translation"/>
    <property type="evidence" value="ECO:0007669"/>
    <property type="project" value="UniProtKB-UniRule"/>
</dbReference>
<dbReference type="CDD" id="cd00337">
    <property type="entry name" value="Ribosomal_uL14"/>
    <property type="match status" value="1"/>
</dbReference>
<dbReference type="FunFam" id="2.40.150.20:FF:000001">
    <property type="entry name" value="50S ribosomal protein L14"/>
    <property type="match status" value="1"/>
</dbReference>
<dbReference type="Gene3D" id="2.40.150.20">
    <property type="entry name" value="Ribosomal protein L14"/>
    <property type="match status" value="1"/>
</dbReference>
<dbReference type="HAMAP" id="MF_01367">
    <property type="entry name" value="Ribosomal_uL14"/>
    <property type="match status" value="1"/>
</dbReference>
<dbReference type="InterPro" id="IPR000218">
    <property type="entry name" value="Ribosomal_uL14"/>
</dbReference>
<dbReference type="InterPro" id="IPR005745">
    <property type="entry name" value="Ribosomal_uL14_bac-type"/>
</dbReference>
<dbReference type="InterPro" id="IPR019972">
    <property type="entry name" value="Ribosomal_uL14_CS"/>
</dbReference>
<dbReference type="InterPro" id="IPR036853">
    <property type="entry name" value="Ribosomal_uL14_sf"/>
</dbReference>
<dbReference type="NCBIfam" id="TIGR01067">
    <property type="entry name" value="rplN_bact"/>
    <property type="match status" value="1"/>
</dbReference>
<dbReference type="PANTHER" id="PTHR11761">
    <property type="entry name" value="50S/60S RIBOSOMAL PROTEIN L14/L23"/>
    <property type="match status" value="1"/>
</dbReference>
<dbReference type="PANTHER" id="PTHR11761:SF3">
    <property type="entry name" value="LARGE RIBOSOMAL SUBUNIT PROTEIN UL14M"/>
    <property type="match status" value="1"/>
</dbReference>
<dbReference type="Pfam" id="PF00238">
    <property type="entry name" value="Ribosomal_L14"/>
    <property type="match status" value="1"/>
</dbReference>
<dbReference type="SMART" id="SM01374">
    <property type="entry name" value="Ribosomal_L14"/>
    <property type="match status" value="1"/>
</dbReference>
<dbReference type="SUPFAM" id="SSF50193">
    <property type="entry name" value="Ribosomal protein L14"/>
    <property type="match status" value="1"/>
</dbReference>
<dbReference type="PROSITE" id="PS00049">
    <property type="entry name" value="RIBOSOMAL_L14"/>
    <property type="match status" value="1"/>
</dbReference>
<keyword id="KW-1185">Reference proteome</keyword>
<keyword id="KW-0687">Ribonucleoprotein</keyword>
<keyword id="KW-0689">Ribosomal protein</keyword>
<keyword id="KW-0694">RNA-binding</keyword>
<keyword id="KW-0699">rRNA-binding</keyword>
<proteinExistence type="inferred from homology"/>
<sequence>MIQQETRLNVADNSGAKQVQCIRVLGGTKKRYASVGDRIVVSVKSASPAGNIKKGAVSKAVVVRTKKEVRRKDGSYIRFDDNAAVLLQNNDELRGTRISGPVARELREKEFMKVVSLAPEVL</sequence>
<protein>
    <recommendedName>
        <fullName evidence="1">Large ribosomal subunit protein uL14</fullName>
    </recommendedName>
    <alternativeName>
        <fullName evidence="2">50S ribosomal protein L14</fullName>
    </alternativeName>
</protein>
<reference key="1">
    <citation type="journal article" date="2010" name="J. Bacteriol.">
        <title>The genome of the amoeba symbiont 'Candidatus Amoebophilus asiaticus' reveals common mechanisms for host cell interaction among amoeba-associated bacteria.</title>
        <authorList>
            <person name="Schmitz-Esser S."/>
            <person name="Tischler P."/>
            <person name="Arnold R."/>
            <person name="Montanaro J."/>
            <person name="Wagner M."/>
            <person name="Rattei T."/>
            <person name="Horn M."/>
        </authorList>
    </citation>
    <scope>NUCLEOTIDE SEQUENCE [LARGE SCALE GENOMIC DNA]</scope>
    <source>
        <strain>5a2</strain>
    </source>
</reference>
<comment type="function">
    <text evidence="1">Binds to 23S rRNA. Forms part of two intersubunit bridges in the 70S ribosome.</text>
</comment>
<comment type="subunit">
    <text evidence="1">Part of the 50S ribosomal subunit. Forms a cluster with proteins L3 and L19. In the 70S ribosome, L14 and L19 interact and together make contacts with the 16S rRNA in bridges B5 and B8.</text>
</comment>
<comment type="similarity">
    <text evidence="1">Belongs to the universal ribosomal protein uL14 family.</text>
</comment>
<evidence type="ECO:0000255" key="1">
    <source>
        <dbReference type="HAMAP-Rule" id="MF_01367"/>
    </source>
</evidence>
<evidence type="ECO:0000305" key="2"/>